<organism>
    <name type="scientific">Bacillus licheniformis (strain ATCC 14580 / DSM 13 / JCM 2505 / CCUG 7422 / NBRC 12200 / NCIMB 9375 / NCTC 10341 / NRRL NRS-1264 / Gibson 46)</name>
    <dbReference type="NCBI Taxonomy" id="279010"/>
    <lineage>
        <taxon>Bacteria</taxon>
        <taxon>Bacillati</taxon>
        <taxon>Bacillota</taxon>
        <taxon>Bacilli</taxon>
        <taxon>Bacillales</taxon>
        <taxon>Bacillaceae</taxon>
        <taxon>Bacillus</taxon>
    </lineage>
</organism>
<accession>Q65H97</accession>
<accession>Q62SQ3</accession>
<gene>
    <name evidence="1" type="primary">ispH</name>
    <name type="ordered locus">BLi02695</name>
    <name type="ordered locus">BL03721</name>
</gene>
<sequence>MNVIKISPRGYCYGVVDAMVIAKNAALDKSLPRPIYILGMIVHNKHVTDAFEKEGIYTLDGPNRLEILNQVDKGTVIFTAHGVSPEVRKIAEDKGLVAIDATCPDVTKTHDLIRKMKAEGYHVIYIGKKGHPEPEGAVGVAPDIVHLVETEEDVERLDIEAEKLIVTNQTTMSQWDVHDIMEKVKEKYPDVEFHQEICLATQVRQEAVSEQAKKADLTIVVGDPKSNNSNRLAQVSEEIAGTKAYRIGDLSELKLEWLDGVETVAVTAGASTPTPITKEVIRFLEQFDHEDPSTWKISHEVPLHKILPKVKAKT</sequence>
<evidence type="ECO:0000255" key="1">
    <source>
        <dbReference type="HAMAP-Rule" id="MF_00191"/>
    </source>
</evidence>
<reference key="1">
    <citation type="journal article" date="2004" name="J. Mol. Microbiol. Biotechnol.">
        <title>The complete genome sequence of Bacillus licheniformis DSM13, an organism with great industrial potential.</title>
        <authorList>
            <person name="Veith B."/>
            <person name="Herzberg C."/>
            <person name="Steckel S."/>
            <person name="Feesche J."/>
            <person name="Maurer K.H."/>
            <person name="Ehrenreich P."/>
            <person name="Baeumer S."/>
            <person name="Henne A."/>
            <person name="Liesegang H."/>
            <person name="Merkl R."/>
            <person name="Ehrenreich A."/>
            <person name="Gottschalk G."/>
        </authorList>
    </citation>
    <scope>NUCLEOTIDE SEQUENCE [LARGE SCALE GENOMIC DNA]</scope>
    <source>
        <strain>ATCC 14580 / DSM 13 / JCM 2505 / CCUG 7422 / NBRC 12200 / NCIMB 9375 / NCTC 10341 / NRRL NRS-1264 / Gibson 46</strain>
    </source>
</reference>
<reference key="2">
    <citation type="journal article" date="2004" name="Genome Biol.">
        <title>Complete genome sequence of the industrial bacterium Bacillus licheniformis and comparisons with closely related Bacillus species.</title>
        <authorList>
            <person name="Rey M.W."/>
            <person name="Ramaiya P."/>
            <person name="Nelson B.A."/>
            <person name="Brody-Karpin S.D."/>
            <person name="Zaretsky E.J."/>
            <person name="Tang M."/>
            <person name="Lopez de Leon A."/>
            <person name="Xiang H."/>
            <person name="Gusti V."/>
            <person name="Clausen I.G."/>
            <person name="Olsen P.B."/>
            <person name="Rasmussen M.D."/>
            <person name="Andersen J.T."/>
            <person name="Joergensen P.L."/>
            <person name="Larsen T.S."/>
            <person name="Sorokin A."/>
            <person name="Bolotin A."/>
            <person name="Lapidus A."/>
            <person name="Galleron N."/>
            <person name="Ehrlich S.D."/>
            <person name="Berka R.M."/>
        </authorList>
    </citation>
    <scope>NUCLEOTIDE SEQUENCE [LARGE SCALE GENOMIC DNA]</scope>
    <source>
        <strain>ATCC 14580 / DSM 13 / JCM 2505 / CCUG 7422 / NBRC 12200 / NCIMB 9375 / NCTC 10341 / NRRL NRS-1264 / Gibson 46</strain>
    </source>
</reference>
<comment type="function">
    <text evidence="1">Catalyzes the conversion of 1-hydroxy-2-methyl-2-(E)-butenyl 4-diphosphate (HMBPP) into a mixture of isopentenyl diphosphate (IPP) and dimethylallyl diphosphate (DMAPP). Acts in the terminal step of the DOXP/MEP pathway for isoprenoid precursor biosynthesis.</text>
</comment>
<comment type="catalytic activity">
    <reaction evidence="1">
        <text>isopentenyl diphosphate + 2 oxidized [2Fe-2S]-[ferredoxin] + H2O = (2E)-4-hydroxy-3-methylbut-2-enyl diphosphate + 2 reduced [2Fe-2S]-[ferredoxin] + 2 H(+)</text>
        <dbReference type="Rhea" id="RHEA:24488"/>
        <dbReference type="Rhea" id="RHEA-COMP:10000"/>
        <dbReference type="Rhea" id="RHEA-COMP:10001"/>
        <dbReference type="ChEBI" id="CHEBI:15377"/>
        <dbReference type="ChEBI" id="CHEBI:15378"/>
        <dbReference type="ChEBI" id="CHEBI:33737"/>
        <dbReference type="ChEBI" id="CHEBI:33738"/>
        <dbReference type="ChEBI" id="CHEBI:128753"/>
        <dbReference type="ChEBI" id="CHEBI:128769"/>
        <dbReference type="EC" id="1.17.7.4"/>
    </reaction>
</comment>
<comment type="catalytic activity">
    <reaction evidence="1">
        <text>dimethylallyl diphosphate + 2 oxidized [2Fe-2S]-[ferredoxin] + H2O = (2E)-4-hydroxy-3-methylbut-2-enyl diphosphate + 2 reduced [2Fe-2S]-[ferredoxin] + 2 H(+)</text>
        <dbReference type="Rhea" id="RHEA:24825"/>
        <dbReference type="Rhea" id="RHEA-COMP:10000"/>
        <dbReference type="Rhea" id="RHEA-COMP:10001"/>
        <dbReference type="ChEBI" id="CHEBI:15377"/>
        <dbReference type="ChEBI" id="CHEBI:15378"/>
        <dbReference type="ChEBI" id="CHEBI:33737"/>
        <dbReference type="ChEBI" id="CHEBI:33738"/>
        <dbReference type="ChEBI" id="CHEBI:57623"/>
        <dbReference type="ChEBI" id="CHEBI:128753"/>
        <dbReference type="EC" id="1.17.7.4"/>
    </reaction>
</comment>
<comment type="cofactor">
    <cofactor evidence="1">
        <name>[4Fe-4S] cluster</name>
        <dbReference type="ChEBI" id="CHEBI:49883"/>
    </cofactor>
    <text evidence="1">Binds 1 [4Fe-4S] cluster per subunit.</text>
</comment>
<comment type="pathway">
    <text evidence="1">Isoprenoid biosynthesis; dimethylallyl diphosphate biosynthesis; dimethylallyl diphosphate from (2E)-4-hydroxy-3-methylbutenyl diphosphate: step 1/1.</text>
</comment>
<comment type="pathway">
    <text evidence="1">Isoprenoid biosynthesis; isopentenyl diphosphate biosynthesis via DXP pathway; isopentenyl diphosphate from 1-deoxy-D-xylulose 5-phosphate: step 6/6.</text>
</comment>
<comment type="similarity">
    <text evidence="1">Belongs to the IspH family.</text>
</comment>
<proteinExistence type="inferred from homology"/>
<protein>
    <recommendedName>
        <fullName evidence="1">4-hydroxy-3-methylbut-2-enyl diphosphate reductase</fullName>
        <shortName evidence="1">HMBPP reductase</shortName>
        <ecNumber evidence="1">1.17.7.4</ecNumber>
    </recommendedName>
</protein>
<feature type="chain" id="PRO_0000128774" description="4-hydroxy-3-methylbut-2-enyl diphosphate reductase">
    <location>
        <begin position="1"/>
        <end position="314"/>
    </location>
</feature>
<feature type="active site" description="Proton donor" evidence="1">
    <location>
        <position position="133"/>
    </location>
</feature>
<feature type="binding site" evidence="1">
    <location>
        <position position="12"/>
    </location>
    <ligand>
        <name>[4Fe-4S] cluster</name>
        <dbReference type="ChEBI" id="CHEBI:49883"/>
    </ligand>
</feature>
<feature type="binding site" evidence="1">
    <location>
        <position position="43"/>
    </location>
    <ligand>
        <name>(2E)-4-hydroxy-3-methylbut-2-enyl diphosphate</name>
        <dbReference type="ChEBI" id="CHEBI:128753"/>
    </ligand>
</feature>
<feature type="binding site" evidence="1">
    <location>
        <position position="43"/>
    </location>
    <ligand>
        <name>dimethylallyl diphosphate</name>
        <dbReference type="ChEBI" id="CHEBI:57623"/>
    </ligand>
</feature>
<feature type="binding site" evidence="1">
    <location>
        <position position="43"/>
    </location>
    <ligand>
        <name>isopentenyl diphosphate</name>
        <dbReference type="ChEBI" id="CHEBI:128769"/>
    </ligand>
</feature>
<feature type="binding site" evidence="1">
    <location>
        <position position="81"/>
    </location>
    <ligand>
        <name>(2E)-4-hydroxy-3-methylbut-2-enyl diphosphate</name>
        <dbReference type="ChEBI" id="CHEBI:128753"/>
    </ligand>
</feature>
<feature type="binding site" evidence="1">
    <location>
        <position position="81"/>
    </location>
    <ligand>
        <name>dimethylallyl diphosphate</name>
        <dbReference type="ChEBI" id="CHEBI:57623"/>
    </ligand>
</feature>
<feature type="binding site" evidence="1">
    <location>
        <position position="81"/>
    </location>
    <ligand>
        <name>isopentenyl diphosphate</name>
        <dbReference type="ChEBI" id="CHEBI:128769"/>
    </ligand>
</feature>
<feature type="binding site" evidence="1">
    <location>
        <position position="103"/>
    </location>
    <ligand>
        <name>[4Fe-4S] cluster</name>
        <dbReference type="ChEBI" id="CHEBI:49883"/>
    </ligand>
</feature>
<feature type="binding site" evidence="1">
    <location>
        <position position="131"/>
    </location>
    <ligand>
        <name>(2E)-4-hydroxy-3-methylbut-2-enyl diphosphate</name>
        <dbReference type="ChEBI" id="CHEBI:128753"/>
    </ligand>
</feature>
<feature type="binding site" evidence="1">
    <location>
        <position position="131"/>
    </location>
    <ligand>
        <name>dimethylallyl diphosphate</name>
        <dbReference type="ChEBI" id="CHEBI:57623"/>
    </ligand>
</feature>
<feature type="binding site" evidence="1">
    <location>
        <position position="131"/>
    </location>
    <ligand>
        <name>isopentenyl diphosphate</name>
        <dbReference type="ChEBI" id="CHEBI:128769"/>
    </ligand>
</feature>
<feature type="binding site" evidence="1">
    <location>
        <position position="170"/>
    </location>
    <ligand>
        <name>(2E)-4-hydroxy-3-methylbut-2-enyl diphosphate</name>
        <dbReference type="ChEBI" id="CHEBI:128753"/>
    </ligand>
</feature>
<feature type="binding site" evidence="1">
    <location>
        <position position="198"/>
    </location>
    <ligand>
        <name>[4Fe-4S] cluster</name>
        <dbReference type="ChEBI" id="CHEBI:49883"/>
    </ligand>
</feature>
<feature type="binding site" evidence="1">
    <location>
        <position position="226"/>
    </location>
    <ligand>
        <name>(2E)-4-hydroxy-3-methylbut-2-enyl diphosphate</name>
        <dbReference type="ChEBI" id="CHEBI:128753"/>
    </ligand>
</feature>
<feature type="binding site" evidence="1">
    <location>
        <position position="226"/>
    </location>
    <ligand>
        <name>dimethylallyl diphosphate</name>
        <dbReference type="ChEBI" id="CHEBI:57623"/>
    </ligand>
</feature>
<feature type="binding site" evidence="1">
    <location>
        <position position="226"/>
    </location>
    <ligand>
        <name>isopentenyl diphosphate</name>
        <dbReference type="ChEBI" id="CHEBI:128769"/>
    </ligand>
</feature>
<feature type="binding site" evidence="1">
    <location>
        <position position="228"/>
    </location>
    <ligand>
        <name>(2E)-4-hydroxy-3-methylbut-2-enyl diphosphate</name>
        <dbReference type="ChEBI" id="CHEBI:128753"/>
    </ligand>
</feature>
<feature type="binding site" evidence="1">
    <location>
        <position position="228"/>
    </location>
    <ligand>
        <name>dimethylallyl diphosphate</name>
        <dbReference type="ChEBI" id="CHEBI:57623"/>
    </ligand>
</feature>
<feature type="binding site" evidence="1">
    <location>
        <position position="228"/>
    </location>
    <ligand>
        <name>isopentenyl diphosphate</name>
        <dbReference type="ChEBI" id="CHEBI:128769"/>
    </ligand>
</feature>
<feature type="binding site" evidence="1">
    <location>
        <position position="271"/>
    </location>
    <ligand>
        <name>(2E)-4-hydroxy-3-methylbut-2-enyl diphosphate</name>
        <dbReference type="ChEBI" id="CHEBI:128753"/>
    </ligand>
</feature>
<feature type="binding site" evidence="1">
    <location>
        <position position="271"/>
    </location>
    <ligand>
        <name>dimethylallyl diphosphate</name>
        <dbReference type="ChEBI" id="CHEBI:57623"/>
    </ligand>
</feature>
<feature type="binding site" evidence="1">
    <location>
        <position position="271"/>
    </location>
    <ligand>
        <name>isopentenyl diphosphate</name>
        <dbReference type="ChEBI" id="CHEBI:128769"/>
    </ligand>
</feature>
<name>ISPH_BACLD</name>
<dbReference type="EC" id="1.17.7.4" evidence="1"/>
<dbReference type="EMBL" id="AE017333">
    <property type="protein sequence ID" value="AAU41567.1"/>
    <property type="molecule type" value="Genomic_DNA"/>
</dbReference>
<dbReference type="EMBL" id="CP000002">
    <property type="protein sequence ID" value="AAU24206.1"/>
    <property type="molecule type" value="Genomic_DNA"/>
</dbReference>
<dbReference type="RefSeq" id="WP_003183572.1">
    <property type="nucleotide sequence ID" value="NC_006322.1"/>
</dbReference>
<dbReference type="SMR" id="Q65H97"/>
<dbReference type="STRING" id="279010.BL03721"/>
<dbReference type="KEGG" id="bld:BLi02695"/>
<dbReference type="KEGG" id="bli:BL03721"/>
<dbReference type="eggNOG" id="COG0761">
    <property type="taxonomic scope" value="Bacteria"/>
</dbReference>
<dbReference type="HOGENOM" id="CLU_027486_0_0_9"/>
<dbReference type="UniPathway" id="UPA00056">
    <property type="reaction ID" value="UER00097"/>
</dbReference>
<dbReference type="UniPathway" id="UPA00059">
    <property type="reaction ID" value="UER00105"/>
</dbReference>
<dbReference type="Proteomes" id="UP000000606">
    <property type="component" value="Chromosome"/>
</dbReference>
<dbReference type="GO" id="GO:0051539">
    <property type="term" value="F:4 iron, 4 sulfur cluster binding"/>
    <property type="evidence" value="ECO:0007669"/>
    <property type="project" value="UniProtKB-UniRule"/>
</dbReference>
<dbReference type="GO" id="GO:0051745">
    <property type="term" value="F:4-hydroxy-3-methylbut-2-enyl diphosphate reductase activity"/>
    <property type="evidence" value="ECO:0007669"/>
    <property type="project" value="UniProtKB-UniRule"/>
</dbReference>
<dbReference type="GO" id="GO:0046872">
    <property type="term" value="F:metal ion binding"/>
    <property type="evidence" value="ECO:0007669"/>
    <property type="project" value="UniProtKB-KW"/>
</dbReference>
<dbReference type="GO" id="GO:0050992">
    <property type="term" value="P:dimethylallyl diphosphate biosynthetic process"/>
    <property type="evidence" value="ECO:0007669"/>
    <property type="project" value="UniProtKB-UniRule"/>
</dbReference>
<dbReference type="GO" id="GO:0019288">
    <property type="term" value="P:isopentenyl diphosphate biosynthetic process, methylerythritol 4-phosphate pathway"/>
    <property type="evidence" value="ECO:0007669"/>
    <property type="project" value="UniProtKB-UniRule"/>
</dbReference>
<dbReference type="GO" id="GO:0016114">
    <property type="term" value="P:terpenoid biosynthetic process"/>
    <property type="evidence" value="ECO:0007669"/>
    <property type="project" value="UniProtKB-UniRule"/>
</dbReference>
<dbReference type="CDD" id="cd13944">
    <property type="entry name" value="lytB_ispH"/>
    <property type="match status" value="1"/>
</dbReference>
<dbReference type="Gene3D" id="3.40.50.11270">
    <property type="match status" value="1"/>
</dbReference>
<dbReference type="Gene3D" id="3.40.1010.20">
    <property type="entry name" value="4-hydroxy-3-methylbut-2-enyl diphosphate reductase, catalytic domain"/>
    <property type="match status" value="2"/>
</dbReference>
<dbReference type="HAMAP" id="MF_00191">
    <property type="entry name" value="IspH"/>
    <property type="match status" value="1"/>
</dbReference>
<dbReference type="InterPro" id="IPR003451">
    <property type="entry name" value="LytB/IspH"/>
</dbReference>
<dbReference type="NCBIfam" id="TIGR00216">
    <property type="entry name" value="ispH_lytB"/>
    <property type="match status" value="1"/>
</dbReference>
<dbReference type="NCBIfam" id="NF002187">
    <property type="entry name" value="PRK01045.1-1"/>
    <property type="match status" value="1"/>
</dbReference>
<dbReference type="PANTHER" id="PTHR30426">
    <property type="entry name" value="4-HYDROXY-3-METHYLBUT-2-ENYL DIPHOSPHATE REDUCTASE"/>
    <property type="match status" value="1"/>
</dbReference>
<dbReference type="PANTHER" id="PTHR30426:SF0">
    <property type="entry name" value="4-HYDROXY-3-METHYLBUT-2-ENYL DIPHOSPHATE REDUCTASE"/>
    <property type="match status" value="1"/>
</dbReference>
<dbReference type="Pfam" id="PF02401">
    <property type="entry name" value="LYTB"/>
    <property type="match status" value="1"/>
</dbReference>
<keyword id="KW-0004">4Fe-4S</keyword>
<keyword id="KW-0408">Iron</keyword>
<keyword id="KW-0411">Iron-sulfur</keyword>
<keyword id="KW-0414">Isoprene biosynthesis</keyword>
<keyword id="KW-0479">Metal-binding</keyword>
<keyword id="KW-0560">Oxidoreductase</keyword>
<keyword id="KW-1185">Reference proteome</keyword>